<evidence type="ECO:0000255" key="1">
    <source>
        <dbReference type="PROSITE-ProRule" id="PRU00395"/>
    </source>
</evidence>
<evidence type="ECO:0000269" key="2">
    <source>
    </source>
</evidence>
<evidence type="ECO:0000303" key="3">
    <source>
    </source>
</evidence>
<evidence type="ECO:0000305" key="4"/>
<name>CYMBA_MELOB</name>
<reference evidence="4" key="1">
    <citation type="journal article" date="2017" name="J. Nat. Prod.">
        <title>Understanding the Diversity and Distribution of Cyclotides from Plants of Varied Genetic Origin.</title>
        <authorList>
            <person name="Ravipati A.S."/>
            <person name="Poth A.G."/>
            <person name="Troeira Henriques S."/>
            <person name="Bhandari M."/>
            <person name="Huang Y.H."/>
            <person name="Nino J."/>
            <person name="Colgrave M.L."/>
            <person name="Craik D.J."/>
        </authorList>
    </citation>
    <scope>PROTEIN SEQUENCE</scope>
</reference>
<dbReference type="SMR" id="C0HKJ7"/>
<dbReference type="GO" id="GO:0006952">
    <property type="term" value="P:defense response"/>
    <property type="evidence" value="ECO:0007669"/>
    <property type="project" value="UniProtKB-KW"/>
</dbReference>
<dbReference type="InterPro" id="IPR005535">
    <property type="entry name" value="Cyclotide"/>
</dbReference>
<dbReference type="InterPro" id="IPR012324">
    <property type="entry name" value="Cyclotide_moebius_CS"/>
</dbReference>
<dbReference type="InterPro" id="IPR036146">
    <property type="entry name" value="Cyclotide_sf"/>
</dbReference>
<dbReference type="Pfam" id="PF03784">
    <property type="entry name" value="Cyclotide"/>
    <property type="match status" value="1"/>
</dbReference>
<dbReference type="SUPFAM" id="SSF57038">
    <property type="entry name" value="Cyclotides"/>
    <property type="match status" value="1"/>
</dbReference>
<dbReference type="PROSITE" id="PS51052">
    <property type="entry name" value="CYCLOTIDE"/>
    <property type="match status" value="1"/>
</dbReference>
<dbReference type="PROSITE" id="PS60009">
    <property type="entry name" value="CYCLOTIDE_MOEBIUS"/>
    <property type="match status" value="1"/>
</dbReference>
<comment type="function">
    <text evidence="1">Probably participates in a plant defense mechanism.</text>
</comment>
<comment type="domain">
    <text evidence="4">The presence of a 'disulfide through disulfide knot' structurally defines this protein as a knottin.</text>
</comment>
<comment type="PTM">
    <text evidence="1">This is a cyclic peptide.</text>
</comment>
<comment type="similarity">
    <text evidence="1">Belongs to the cyclotide family. Moebius subfamily.</text>
</comment>
<comment type="caution">
    <text evidence="1">This peptide is cyclic. The start position was chosen by similarity to Oak1 (kalata B1) for which the DNA sequence is known.</text>
</comment>
<protein>
    <recommendedName>
        <fullName evidence="3">Cyclotide mobo-A</fullName>
    </recommendedName>
</protein>
<feature type="peptide" id="PRO_0000441361" description="Cyclotide mobo-A" evidence="2">
    <location>
        <begin position="1"/>
        <end position="29"/>
    </location>
</feature>
<feature type="disulfide bond" evidence="1">
    <location>
        <begin position="5"/>
        <end position="19"/>
    </location>
</feature>
<feature type="disulfide bond" evidence="1">
    <location>
        <begin position="9"/>
        <end position="21"/>
    </location>
</feature>
<feature type="disulfide bond" evidence="1">
    <location>
        <begin position="14"/>
        <end position="26"/>
    </location>
</feature>
<feature type="cross-link" description="Cyclopeptide (Gly-Asn)" evidence="3">
    <location>
        <begin position="1"/>
        <end position="29"/>
    </location>
</feature>
<sequence>GFPTCGETCTLGTCNTPGCTCSWPICTRN</sequence>
<keyword id="KW-0903">Direct protein sequencing</keyword>
<keyword id="KW-1015">Disulfide bond</keyword>
<keyword id="KW-0611">Plant defense</keyword>
<proteinExistence type="evidence at protein level"/>
<accession>C0HKJ7</accession>
<organism evidence="3">
    <name type="scientific">Melicytus obovatus</name>
    <name type="common">Hymenanthera obovata</name>
    <dbReference type="NCBI Taxonomy" id="450841"/>
    <lineage>
        <taxon>Eukaryota</taxon>
        <taxon>Viridiplantae</taxon>
        <taxon>Streptophyta</taxon>
        <taxon>Embryophyta</taxon>
        <taxon>Tracheophyta</taxon>
        <taxon>Spermatophyta</taxon>
        <taxon>Magnoliopsida</taxon>
        <taxon>eudicotyledons</taxon>
        <taxon>Gunneridae</taxon>
        <taxon>Pentapetalae</taxon>
        <taxon>rosids</taxon>
        <taxon>fabids</taxon>
        <taxon>Malpighiales</taxon>
        <taxon>Violaceae</taxon>
        <taxon>Melicytus</taxon>
    </lineage>
</organism>